<protein>
    <recommendedName>
        <fullName evidence="1">tRNA N6-adenosine threonylcarbamoyltransferase</fullName>
        <ecNumber evidence="1">2.3.1.234</ecNumber>
    </recommendedName>
    <alternativeName>
        <fullName evidence="1">N6-L-threonylcarbamoyladenine synthase</fullName>
        <shortName evidence="1">t(6)A synthase</shortName>
    </alternativeName>
    <alternativeName>
        <fullName evidence="1">t(6)A37 threonylcarbamoyladenosine biosynthesis protein TsaD</fullName>
    </alternativeName>
    <alternativeName>
        <fullName evidence="1">tRNA threonylcarbamoyladenosine biosynthesis protein TsaD</fullName>
    </alternativeName>
</protein>
<dbReference type="EC" id="2.3.1.234" evidence="1"/>
<dbReference type="EMBL" id="CP000607">
    <property type="protein sequence ID" value="ABP36246.1"/>
    <property type="molecule type" value="Genomic_DNA"/>
</dbReference>
<dbReference type="SMR" id="A4SCN7"/>
<dbReference type="STRING" id="290318.Cvib_0224"/>
<dbReference type="KEGG" id="pvi:Cvib_0224"/>
<dbReference type="eggNOG" id="COG0533">
    <property type="taxonomic scope" value="Bacteria"/>
</dbReference>
<dbReference type="HOGENOM" id="CLU_023208_0_2_10"/>
<dbReference type="OrthoDB" id="9806197at2"/>
<dbReference type="GO" id="GO:0005737">
    <property type="term" value="C:cytoplasm"/>
    <property type="evidence" value="ECO:0007669"/>
    <property type="project" value="UniProtKB-SubCell"/>
</dbReference>
<dbReference type="GO" id="GO:0005506">
    <property type="term" value="F:iron ion binding"/>
    <property type="evidence" value="ECO:0007669"/>
    <property type="project" value="UniProtKB-UniRule"/>
</dbReference>
<dbReference type="GO" id="GO:0061711">
    <property type="term" value="F:N(6)-L-threonylcarbamoyladenine synthase activity"/>
    <property type="evidence" value="ECO:0007669"/>
    <property type="project" value="UniProtKB-EC"/>
</dbReference>
<dbReference type="GO" id="GO:0002949">
    <property type="term" value="P:tRNA threonylcarbamoyladenosine modification"/>
    <property type="evidence" value="ECO:0007669"/>
    <property type="project" value="UniProtKB-UniRule"/>
</dbReference>
<dbReference type="CDD" id="cd24133">
    <property type="entry name" value="ASKHA_NBD_TsaD_bac"/>
    <property type="match status" value="1"/>
</dbReference>
<dbReference type="FunFam" id="3.30.420.40:FF:000012">
    <property type="entry name" value="tRNA N6-adenosine threonylcarbamoyltransferase"/>
    <property type="match status" value="1"/>
</dbReference>
<dbReference type="FunFam" id="3.30.420.40:FF:000040">
    <property type="entry name" value="tRNA N6-adenosine threonylcarbamoyltransferase"/>
    <property type="match status" value="1"/>
</dbReference>
<dbReference type="Gene3D" id="3.30.420.40">
    <property type="match status" value="2"/>
</dbReference>
<dbReference type="HAMAP" id="MF_01445">
    <property type="entry name" value="TsaD"/>
    <property type="match status" value="1"/>
</dbReference>
<dbReference type="InterPro" id="IPR043129">
    <property type="entry name" value="ATPase_NBD"/>
</dbReference>
<dbReference type="InterPro" id="IPR000905">
    <property type="entry name" value="Gcp-like_dom"/>
</dbReference>
<dbReference type="InterPro" id="IPR017861">
    <property type="entry name" value="KAE1/TsaD"/>
</dbReference>
<dbReference type="InterPro" id="IPR022450">
    <property type="entry name" value="TsaD"/>
</dbReference>
<dbReference type="NCBIfam" id="TIGR00329">
    <property type="entry name" value="gcp_kae1"/>
    <property type="match status" value="1"/>
</dbReference>
<dbReference type="NCBIfam" id="TIGR03723">
    <property type="entry name" value="T6A_TsaD_YgjD"/>
    <property type="match status" value="1"/>
</dbReference>
<dbReference type="PANTHER" id="PTHR11735">
    <property type="entry name" value="TRNA N6-ADENOSINE THREONYLCARBAMOYLTRANSFERASE"/>
    <property type="match status" value="1"/>
</dbReference>
<dbReference type="PANTHER" id="PTHR11735:SF6">
    <property type="entry name" value="TRNA N6-ADENOSINE THREONYLCARBAMOYLTRANSFERASE, MITOCHONDRIAL"/>
    <property type="match status" value="1"/>
</dbReference>
<dbReference type="Pfam" id="PF00814">
    <property type="entry name" value="TsaD"/>
    <property type="match status" value="1"/>
</dbReference>
<dbReference type="PRINTS" id="PR00789">
    <property type="entry name" value="OSIALOPTASE"/>
</dbReference>
<dbReference type="SUPFAM" id="SSF53067">
    <property type="entry name" value="Actin-like ATPase domain"/>
    <property type="match status" value="1"/>
</dbReference>
<feature type="chain" id="PRO_1000087483" description="tRNA N6-adenosine threonylcarbamoyltransferase">
    <location>
        <begin position="1"/>
        <end position="345"/>
    </location>
</feature>
<feature type="binding site" evidence="1">
    <location>
        <position position="109"/>
    </location>
    <ligand>
        <name>Fe cation</name>
        <dbReference type="ChEBI" id="CHEBI:24875"/>
    </ligand>
</feature>
<feature type="binding site" evidence="1">
    <location>
        <position position="113"/>
    </location>
    <ligand>
        <name>Fe cation</name>
        <dbReference type="ChEBI" id="CHEBI:24875"/>
    </ligand>
</feature>
<feature type="binding site" evidence="1">
    <location>
        <begin position="136"/>
        <end position="140"/>
    </location>
    <ligand>
        <name>substrate</name>
    </ligand>
</feature>
<feature type="binding site" evidence="1">
    <location>
        <position position="169"/>
    </location>
    <ligand>
        <name>substrate</name>
    </ligand>
</feature>
<feature type="binding site" evidence="1">
    <location>
        <position position="182"/>
    </location>
    <ligand>
        <name>substrate</name>
    </ligand>
</feature>
<feature type="binding site" evidence="1">
    <location>
        <position position="186"/>
    </location>
    <ligand>
        <name>substrate</name>
    </ligand>
</feature>
<feature type="binding site" evidence="1">
    <location>
        <position position="284"/>
    </location>
    <ligand>
        <name>substrate</name>
    </ligand>
</feature>
<feature type="binding site" evidence="1">
    <location>
        <position position="312"/>
    </location>
    <ligand>
        <name>Fe cation</name>
        <dbReference type="ChEBI" id="CHEBI:24875"/>
    </ligand>
</feature>
<accession>A4SCN7</accession>
<reference key="1">
    <citation type="submission" date="2007-03" db="EMBL/GenBank/DDBJ databases">
        <title>Complete sequence of Prosthecochloris vibrioformis DSM 265.</title>
        <authorList>
            <consortium name="US DOE Joint Genome Institute"/>
            <person name="Copeland A."/>
            <person name="Lucas S."/>
            <person name="Lapidus A."/>
            <person name="Barry K."/>
            <person name="Detter J.C."/>
            <person name="Glavina del Rio T."/>
            <person name="Hammon N."/>
            <person name="Israni S."/>
            <person name="Pitluck S."/>
            <person name="Schmutz J."/>
            <person name="Larimer F."/>
            <person name="Land M."/>
            <person name="Hauser L."/>
            <person name="Mikhailova N."/>
            <person name="Li T."/>
            <person name="Overmann J."/>
            <person name="Schuster S.C."/>
            <person name="Bryant D.A."/>
            <person name="Richardson P."/>
        </authorList>
    </citation>
    <scope>NUCLEOTIDE SEQUENCE [LARGE SCALE GENOMIC DNA]</scope>
    <source>
        <strain>DSM 265 / 1930</strain>
    </source>
</reference>
<gene>
    <name evidence="1" type="primary">tsaD</name>
    <name type="synonym">gcp</name>
    <name type="ordered locus">Cvib_0224</name>
</gene>
<organism>
    <name type="scientific">Chlorobium phaeovibrioides (strain DSM 265 / 1930)</name>
    <name type="common">Prosthecochloris vibrioformis (strain DSM 265)</name>
    <dbReference type="NCBI Taxonomy" id="290318"/>
    <lineage>
        <taxon>Bacteria</taxon>
        <taxon>Pseudomonadati</taxon>
        <taxon>Chlorobiota</taxon>
        <taxon>Chlorobiia</taxon>
        <taxon>Chlorobiales</taxon>
        <taxon>Chlorobiaceae</taxon>
        <taxon>Chlorobium/Pelodictyon group</taxon>
        <taxon>Chlorobium</taxon>
    </lineage>
</organism>
<evidence type="ECO:0000255" key="1">
    <source>
        <dbReference type="HAMAP-Rule" id="MF_01445"/>
    </source>
</evidence>
<keyword id="KW-0012">Acyltransferase</keyword>
<keyword id="KW-0963">Cytoplasm</keyword>
<keyword id="KW-0408">Iron</keyword>
<keyword id="KW-0479">Metal-binding</keyword>
<keyword id="KW-0808">Transferase</keyword>
<keyword id="KW-0819">tRNA processing</keyword>
<sequence length="345" mass="36728">MIILGLETSCDETSAAVVQNGKVLSNIVSSQCCHTDFGGVVPELASREHERLMVAITDAALSEANITKNDLDVIAATAGPGLIGAVMVGLCFAQSMAWALQVPFVPVNHIEAHMFSPFIEAGAAKGVPEEPFISLTVSGGHTLLSIIGTDLSRRIIGRTLDDAAGEAFDKTGKMLGLSYPAGPEIDRLAKQGNPSFHRFPRALTAQSQTSKSYRGNYDFSFSGLKTSVLTWLQKQSPEYIDRHRADIAASIQDAIVSVLQEKTVAAALCHQINSIAIAGGVSANSALRAAMEKECSRQGIRLHLPGPVYSTDNAAMIAALCELQISRGMRPERRYSTAPFAGMPS</sequence>
<name>TSAD_CHLPM</name>
<proteinExistence type="inferred from homology"/>
<comment type="function">
    <text evidence="1">Required for the formation of a threonylcarbamoyl group on adenosine at position 37 (t(6)A37) in tRNAs that read codons beginning with adenine. Is involved in the transfer of the threonylcarbamoyl moiety of threonylcarbamoyl-AMP (TC-AMP) to the N6 group of A37, together with TsaE and TsaB. TsaD likely plays a direct catalytic role in this reaction.</text>
</comment>
<comment type="catalytic activity">
    <reaction evidence="1">
        <text>L-threonylcarbamoyladenylate + adenosine(37) in tRNA = N(6)-L-threonylcarbamoyladenosine(37) in tRNA + AMP + H(+)</text>
        <dbReference type="Rhea" id="RHEA:37059"/>
        <dbReference type="Rhea" id="RHEA-COMP:10162"/>
        <dbReference type="Rhea" id="RHEA-COMP:10163"/>
        <dbReference type="ChEBI" id="CHEBI:15378"/>
        <dbReference type="ChEBI" id="CHEBI:73682"/>
        <dbReference type="ChEBI" id="CHEBI:74411"/>
        <dbReference type="ChEBI" id="CHEBI:74418"/>
        <dbReference type="ChEBI" id="CHEBI:456215"/>
        <dbReference type="EC" id="2.3.1.234"/>
    </reaction>
</comment>
<comment type="cofactor">
    <cofactor evidence="1">
        <name>Fe(2+)</name>
        <dbReference type="ChEBI" id="CHEBI:29033"/>
    </cofactor>
    <text evidence="1">Binds 1 Fe(2+) ion per subunit.</text>
</comment>
<comment type="subcellular location">
    <subcellularLocation>
        <location evidence="1">Cytoplasm</location>
    </subcellularLocation>
</comment>
<comment type="similarity">
    <text evidence="1">Belongs to the KAE1 / TsaD family.</text>
</comment>